<proteinExistence type="evidence at transcript level"/>
<evidence type="ECO:0000250" key="1"/>
<evidence type="ECO:0000250" key="2">
    <source>
        <dbReference type="UniProtKB" id="Q501J7"/>
    </source>
</evidence>
<evidence type="ECO:0000250" key="3">
    <source>
        <dbReference type="UniProtKB" id="Q8IZ21"/>
    </source>
</evidence>
<evidence type="ECO:0000256" key="4">
    <source>
        <dbReference type="SAM" id="MobiDB-lite"/>
    </source>
</evidence>
<evidence type="ECO:0000305" key="5"/>
<keyword id="KW-0009">Actin-binding</keyword>
<keyword id="KW-0966">Cell projection</keyword>
<keyword id="KW-0963">Cytoplasm</keyword>
<keyword id="KW-0217">Developmental protein</keyword>
<keyword id="KW-0524">Neurogenesis</keyword>
<keyword id="KW-0597">Phosphoprotein</keyword>
<keyword id="KW-1185">Reference proteome</keyword>
<keyword id="KW-0677">Repeat</keyword>
<gene>
    <name type="primary">PHACTR4</name>
</gene>
<feature type="chain" id="PRO_0000287308" description="Phosphatase and actin regulator 4">
    <location>
        <begin position="1"/>
        <end position="702"/>
    </location>
</feature>
<feature type="repeat" description="RPEL 1">
    <location>
        <begin position="63"/>
        <end position="88"/>
    </location>
</feature>
<feature type="repeat" description="RPEL 2">
    <location>
        <begin position="583"/>
        <end position="608"/>
    </location>
</feature>
<feature type="repeat" description="RPEL 3">
    <location>
        <begin position="621"/>
        <end position="646"/>
    </location>
</feature>
<feature type="region of interest" description="Disordered" evidence="4">
    <location>
        <begin position="1"/>
        <end position="38"/>
    </location>
</feature>
<feature type="region of interest" description="Disordered" evidence="4">
    <location>
        <begin position="82"/>
        <end position="194"/>
    </location>
</feature>
<feature type="region of interest" description="Disordered" evidence="4">
    <location>
        <begin position="222"/>
        <end position="363"/>
    </location>
</feature>
<feature type="region of interest" description="Disordered" evidence="4">
    <location>
        <begin position="473"/>
        <end position="536"/>
    </location>
</feature>
<feature type="region of interest" description="Disordered" evidence="4">
    <location>
        <begin position="592"/>
        <end position="615"/>
    </location>
</feature>
<feature type="compositionally biased region" description="Polar residues" evidence="4">
    <location>
        <begin position="106"/>
        <end position="120"/>
    </location>
</feature>
<feature type="compositionally biased region" description="Polar residues" evidence="4">
    <location>
        <begin position="147"/>
        <end position="156"/>
    </location>
</feature>
<feature type="compositionally biased region" description="Pro residues" evidence="4">
    <location>
        <begin position="163"/>
        <end position="173"/>
    </location>
</feature>
<feature type="compositionally biased region" description="Low complexity" evidence="4">
    <location>
        <begin position="233"/>
        <end position="250"/>
    </location>
</feature>
<feature type="compositionally biased region" description="Polar residues" evidence="4">
    <location>
        <begin position="301"/>
        <end position="318"/>
    </location>
</feature>
<feature type="compositionally biased region" description="Pro residues" evidence="4">
    <location>
        <begin position="342"/>
        <end position="362"/>
    </location>
</feature>
<feature type="compositionally biased region" description="Low complexity" evidence="4">
    <location>
        <begin position="486"/>
        <end position="497"/>
    </location>
</feature>
<feature type="compositionally biased region" description="Acidic residues" evidence="4">
    <location>
        <begin position="508"/>
        <end position="518"/>
    </location>
</feature>
<feature type="modified residue" description="Phosphoserine" evidence="2">
    <location>
        <position position="116"/>
    </location>
</feature>
<feature type="modified residue" description="Phosphoserine" evidence="3">
    <location>
        <position position="118"/>
    </location>
</feature>
<feature type="modified residue" description="Phosphoserine" evidence="3">
    <location>
        <position position="131"/>
    </location>
</feature>
<feature type="modified residue" description="Phosphoserine" evidence="3">
    <location>
        <position position="147"/>
    </location>
</feature>
<feature type="modified residue" description="Phosphoserine" evidence="2">
    <location>
        <position position="270"/>
    </location>
</feature>
<feature type="modified residue" description="Phosphoserine" evidence="3">
    <location>
        <position position="291"/>
    </location>
</feature>
<feature type="modified residue" description="Phosphoserine" evidence="3">
    <location>
        <position position="342"/>
    </location>
</feature>
<feature type="modified residue" description="Phosphoserine" evidence="3">
    <location>
        <position position="344"/>
    </location>
</feature>
<feature type="modified residue" description="Phosphothreonine" evidence="3">
    <location>
        <position position="358"/>
    </location>
</feature>
<feature type="modified residue" description="Phosphoserine" evidence="3">
    <location>
        <position position="427"/>
    </location>
</feature>
<feature type="modified residue" description="Phosphothreonine" evidence="3">
    <location>
        <position position="432"/>
    </location>
</feature>
<feature type="modified residue" description="Phosphoserine" evidence="3">
    <location>
        <position position="443"/>
    </location>
</feature>
<feature type="modified residue" description="Phosphoserine" evidence="2">
    <location>
        <position position="453"/>
    </location>
</feature>
<feature type="modified residue" description="Phosphoserine" evidence="3">
    <location>
        <position position="464"/>
    </location>
</feature>
<feature type="modified residue" description="Phosphoserine" evidence="2">
    <location>
        <position position="514"/>
    </location>
</feature>
<feature type="modified residue" description="Phosphoserine" evidence="2">
    <location>
        <position position="516"/>
    </location>
</feature>
<feature type="modified residue" description="Phosphoserine" evidence="3">
    <location>
        <position position="557"/>
    </location>
</feature>
<feature type="modified residue" description="Phosphoserine" evidence="3">
    <location>
        <position position="590"/>
    </location>
</feature>
<feature type="modified residue" description="Phosphoserine" evidence="3">
    <location>
        <position position="628"/>
    </location>
</feature>
<protein>
    <recommendedName>
        <fullName>Phosphatase and actin regulator 4</fullName>
    </recommendedName>
</protein>
<name>PHAR4_PONAB</name>
<organism>
    <name type="scientific">Pongo abelii</name>
    <name type="common">Sumatran orangutan</name>
    <name type="synonym">Pongo pygmaeus abelii</name>
    <dbReference type="NCBI Taxonomy" id="9601"/>
    <lineage>
        <taxon>Eukaryota</taxon>
        <taxon>Metazoa</taxon>
        <taxon>Chordata</taxon>
        <taxon>Craniata</taxon>
        <taxon>Vertebrata</taxon>
        <taxon>Euteleostomi</taxon>
        <taxon>Mammalia</taxon>
        <taxon>Eutheria</taxon>
        <taxon>Euarchontoglires</taxon>
        <taxon>Primates</taxon>
        <taxon>Haplorrhini</taxon>
        <taxon>Catarrhini</taxon>
        <taxon>Hominidae</taxon>
        <taxon>Pongo</taxon>
    </lineage>
</organism>
<reference key="1">
    <citation type="submission" date="2004-11" db="EMBL/GenBank/DDBJ databases">
        <authorList>
            <consortium name="The German cDNA consortium"/>
        </authorList>
    </citation>
    <scope>NUCLEOTIDE SEQUENCE [LARGE SCALE MRNA]</scope>
    <source>
        <tissue>Kidney</tissue>
    </source>
</reference>
<comment type="function">
    <text evidence="1">Regulator of protein phosphatase 1 (PP1) required for neural tube and optic fissure closure, and enteric neural crest cell (ENCCs) migration during development. Acts as an activator of PP1 by interacting with PPP1CA and preventing phosphorylation of PPP1CA at 'Thr-320'. During neural tube closure, localizes to the ventral neural tube and activates PP1, leading to down-regulate cell proliferation within cranial neural tissue and the neural retina. Also acts as a regulator of migration of enteric neural crest cells (ENCCs) by activating PP1, leading to dephosphorylation and subsequent activation of cofilin (COF1 or COF2) and repression of the integrin signaling through the RHO/ROCK pathway (By similarity).</text>
</comment>
<comment type="subunit">
    <text evidence="1">Binds PPP1CA and actin.</text>
</comment>
<comment type="subcellular location">
    <subcellularLocation>
        <location evidence="1">Cytoplasm</location>
    </subcellularLocation>
    <subcellularLocation>
        <location evidence="1">Cell projection</location>
        <location evidence="1">Lamellipodium</location>
    </subcellularLocation>
</comment>
<comment type="similarity">
    <text evidence="5">Belongs to the phosphatase and actin regulator family.</text>
</comment>
<comment type="sequence caution" evidence="5">
    <conflict type="frameshift">
        <sequence resource="EMBL-CDS" id="CAH91119"/>
    </conflict>
</comment>
<sequence>MEDPFEEADQPATEPGMVMDSVEAGDTTPPTKRKSKFSGVGKIFKPWKWRKKKSSDKFKETSEVLERKISMRKPREELVKRGVLLEDPEQGGEDPGKPSHAMLKNGHTTPIGNARSSSPVQVEEEPVRLASLRKAIPEEDLKKRLGSTGSQPNSEAESVPENVPKPPLLPPKRPLSSSHEASEGQAKDATSSGGTARFIISTSITTAPAATTAATSLAKTVNLSVTPSPAPRTLPAAPASTNTTATPSLTHMVPAKQPPIPPPKPAHRNSNPVIAELSQAINSGTLLSKPSPPLPPKRGIPSTSVPTLESAAAITTKTPSDEREKSTCSMGSELLPMISPRSPSPPLPTHIPPEPPRTPPFPAKTFQVVPEIQFPPSLDLHQEIPQQEDQKKEVPKRILDQNFGEPHIPSRLPPLPLHIRIQQALTSPLPVTPTLEGSHRAHSLLFENSDSFSEDSSTLGRTRSLPITIEMLKVPDDEEEEEQICPSTFSEETTPTSVIPKLPQCLREEEEKESDSDSEGPIQYRDEEDEDESYQSALANKVKRKDTLAMKLNHRPSEPELNLNSWPCKSKEEWNEIRHQIGNTLIRRLSQRPTPEELEQRNILQPKNEADRQAEKREIKRRLTRKLSQRPTVAELLARKILRFNEYVEVTDAQDYDRRADKPWTKLTPADKAAIRKELNEFKSSEMEVHEESKHFTRYHRP</sequence>
<dbReference type="EMBL" id="CR858921">
    <property type="protein sequence ID" value="CAH91119.1"/>
    <property type="status" value="ALT_SEQ"/>
    <property type="molecule type" value="mRNA"/>
</dbReference>
<dbReference type="RefSeq" id="NP_001125654.1">
    <property type="nucleotide sequence ID" value="NM_001132182.1"/>
</dbReference>
<dbReference type="SMR" id="Q5RAU1"/>
<dbReference type="FunCoup" id="Q5RAU1">
    <property type="interactions" value="632"/>
</dbReference>
<dbReference type="STRING" id="9601.ENSPPYP00000001896"/>
<dbReference type="GeneID" id="100172574"/>
<dbReference type="KEGG" id="pon:100172574"/>
<dbReference type="CTD" id="65979"/>
<dbReference type="eggNOG" id="KOG4339">
    <property type="taxonomic scope" value="Eukaryota"/>
</dbReference>
<dbReference type="InParanoid" id="Q5RAU1"/>
<dbReference type="OrthoDB" id="5563016at2759"/>
<dbReference type="Proteomes" id="UP000001595">
    <property type="component" value="Unplaced"/>
</dbReference>
<dbReference type="GO" id="GO:0005737">
    <property type="term" value="C:cytoplasm"/>
    <property type="evidence" value="ECO:0007669"/>
    <property type="project" value="UniProtKB-SubCell"/>
</dbReference>
<dbReference type="GO" id="GO:0030027">
    <property type="term" value="C:lamellipodium"/>
    <property type="evidence" value="ECO:0000250"/>
    <property type="project" value="UniProtKB"/>
</dbReference>
<dbReference type="GO" id="GO:0003779">
    <property type="term" value="F:actin binding"/>
    <property type="evidence" value="ECO:0000250"/>
    <property type="project" value="UniProtKB"/>
</dbReference>
<dbReference type="GO" id="GO:0008157">
    <property type="term" value="F:protein phosphatase 1 binding"/>
    <property type="evidence" value="ECO:0000250"/>
    <property type="project" value="UniProtKB"/>
</dbReference>
<dbReference type="GO" id="GO:0072542">
    <property type="term" value="F:protein phosphatase activator activity"/>
    <property type="evidence" value="ECO:0000250"/>
    <property type="project" value="UniProtKB"/>
</dbReference>
<dbReference type="GO" id="GO:0030036">
    <property type="term" value="P:actin cytoskeleton organization"/>
    <property type="evidence" value="ECO:0000250"/>
    <property type="project" value="UniProtKB"/>
</dbReference>
<dbReference type="GO" id="GO:0061386">
    <property type="term" value="P:closure of optic fissure"/>
    <property type="evidence" value="ECO:0000250"/>
    <property type="project" value="UniProtKB"/>
</dbReference>
<dbReference type="GO" id="GO:0048484">
    <property type="term" value="P:enteric nervous system development"/>
    <property type="evidence" value="ECO:0000250"/>
    <property type="project" value="UniProtKB"/>
</dbReference>
<dbReference type="GO" id="GO:2001045">
    <property type="term" value="P:negative regulation of integrin-mediated signaling pathway"/>
    <property type="evidence" value="ECO:0000250"/>
    <property type="project" value="UniProtKB"/>
</dbReference>
<dbReference type="GO" id="GO:0001755">
    <property type="term" value="P:neural crest cell migration"/>
    <property type="evidence" value="ECO:0000250"/>
    <property type="project" value="UniProtKB"/>
</dbReference>
<dbReference type="GO" id="GO:0001843">
    <property type="term" value="P:neural tube closure"/>
    <property type="evidence" value="ECO:0000250"/>
    <property type="project" value="UniProtKB"/>
</dbReference>
<dbReference type="GO" id="GO:0043085">
    <property type="term" value="P:positive regulation of catalytic activity"/>
    <property type="evidence" value="ECO:0000250"/>
    <property type="project" value="UniProtKB"/>
</dbReference>
<dbReference type="GO" id="GO:0051726">
    <property type="term" value="P:regulation of cell cycle"/>
    <property type="evidence" value="ECO:0000250"/>
    <property type="project" value="UniProtKB"/>
</dbReference>
<dbReference type="GO" id="GO:0007266">
    <property type="term" value="P:Rho protein signal transduction"/>
    <property type="evidence" value="ECO:0000250"/>
    <property type="project" value="UniProtKB"/>
</dbReference>
<dbReference type="Gene3D" id="6.10.140.1750">
    <property type="match status" value="1"/>
</dbReference>
<dbReference type="Gene3D" id="6.10.140.2130">
    <property type="match status" value="1"/>
</dbReference>
<dbReference type="InterPro" id="IPR004018">
    <property type="entry name" value="RPEL_repeat"/>
</dbReference>
<dbReference type="PANTHER" id="PTHR12751:SF4">
    <property type="entry name" value="PHOSPHATASE AND ACTIN REGULATOR 4"/>
    <property type="match status" value="1"/>
</dbReference>
<dbReference type="PANTHER" id="PTHR12751">
    <property type="entry name" value="PHOSPHATASE AND ACTIN REGULATOR PHACTR"/>
    <property type="match status" value="1"/>
</dbReference>
<dbReference type="Pfam" id="PF02755">
    <property type="entry name" value="RPEL"/>
    <property type="match status" value="3"/>
</dbReference>
<dbReference type="SMART" id="SM00707">
    <property type="entry name" value="RPEL"/>
    <property type="match status" value="3"/>
</dbReference>
<dbReference type="PROSITE" id="PS51073">
    <property type="entry name" value="RPEL"/>
    <property type="match status" value="3"/>
</dbReference>
<accession>Q5RAU1</accession>